<proteinExistence type="inferred from homology"/>
<reference key="1">
    <citation type="journal article" date="2001" name="Nature">
        <title>Genome sequence of enterohaemorrhagic Escherichia coli O157:H7.</title>
        <authorList>
            <person name="Perna N.T."/>
            <person name="Plunkett G. III"/>
            <person name="Burland V."/>
            <person name="Mau B."/>
            <person name="Glasner J.D."/>
            <person name="Rose D.J."/>
            <person name="Mayhew G.F."/>
            <person name="Evans P.S."/>
            <person name="Gregor J."/>
            <person name="Kirkpatrick H.A."/>
            <person name="Posfai G."/>
            <person name="Hackett J."/>
            <person name="Klink S."/>
            <person name="Boutin A."/>
            <person name="Shao Y."/>
            <person name="Miller L."/>
            <person name="Grotbeck E.J."/>
            <person name="Davis N.W."/>
            <person name="Lim A."/>
            <person name="Dimalanta E.T."/>
            <person name="Potamousis K."/>
            <person name="Apodaca J."/>
            <person name="Anantharaman T.S."/>
            <person name="Lin J."/>
            <person name="Yen G."/>
            <person name="Schwartz D.C."/>
            <person name="Welch R.A."/>
            <person name="Blattner F.R."/>
        </authorList>
    </citation>
    <scope>NUCLEOTIDE SEQUENCE [LARGE SCALE GENOMIC DNA]</scope>
    <source>
        <strain>O157:H7 / EDL933 / ATCC 700927 / EHEC</strain>
    </source>
</reference>
<reference key="2">
    <citation type="journal article" date="2001" name="DNA Res.">
        <title>Complete genome sequence of enterohemorrhagic Escherichia coli O157:H7 and genomic comparison with a laboratory strain K-12.</title>
        <authorList>
            <person name="Hayashi T."/>
            <person name="Makino K."/>
            <person name="Ohnishi M."/>
            <person name="Kurokawa K."/>
            <person name="Ishii K."/>
            <person name="Yokoyama K."/>
            <person name="Han C.-G."/>
            <person name="Ohtsubo E."/>
            <person name="Nakayama K."/>
            <person name="Murata T."/>
            <person name="Tanaka M."/>
            <person name="Tobe T."/>
            <person name="Iida T."/>
            <person name="Takami H."/>
            <person name="Honda T."/>
            <person name="Sasakawa C."/>
            <person name="Ogasawara N."/>
            <person name="Yasunaga T."/>
            <person name="Kuhara S."/>
            <person name="Shiba T."/>
            <person name="Hattori M."/>
            <person name="Shinagawa H."/>
        </authorList>
    </citation>
    <scope>NUCLEOTIDE SEQUENCE [LARGE SCALE GENOMIC DNA]</scope>
    <source>
        <strain>O157:H7 / Sakai / RIMD 0509952 / EHEC</strain>
    </source>
</reference>
<organism>
    <name type="scientific">Escherichia coli O157:H7</name>
    <dbReference type="NCBI Taxonomy" id="83334"/>
    <lineage>
        <taxon>Bacteria</taxon>
        <taxon>Pseudomonadati</taxon>
        <taxon>Pseudomonadota</taxon>
        <taxon>Gammaproteobacteria</taxon>
        <taxon>Enterobacterales</taxon>
        <taxon>Enterobacteriaceae</taxon>
        <taxon>Escherichia</taxon>
    </lineage>
</organism>
<gene>
    <name type="primary">mltA</name>
    <name type="ordered locus">Z4130</name>
    <name type="ordered locus">ECs3673</name>
</gene>
<evidence type="ECO:0000250" key="1"/>
<evidence type="ECO:0000255" key="2">
    <source>
        <dbReference type="PROSITE-ProRule" id="PRU00303"/>
    </source>
</evidence>
<accession>P0A936</accession>
<accession>P46885</accession>
<accession>P76638</accession>
<accession>Q46928</accession>
<comment type="function">
    <text evidence="1">Murein-degrading enzyme. May play a role in recycling of muropeptides during cell elongation and/or cell division. Degrades murein glycan strands and insoluble, high-molecular weight murein sacculi (By similarity).</text>
</comment>
<comment type="catalytic activity">
    <reaction>
        <text>Exolytic cleavage of the (1-&gt;4)-beta-glycosidic linkage between N-acetylmuramic acid (MurNAc) and N-acetylglucosamine (GlcNAc) residues in peptidoglycan, from either the reducing or the non-reducing ends of the peptidoglycan chains, with concomitant formation of a 1,6-anhydrobond in the MurNAc residue.</text>
        <dbReference type="EC" id="4.2.2.n1"/>
    </reaction>
</comment>
<comment type="subcellular location">
    <subcellularLocation>
        <location evidence="1">Cell outer membrane</location>
        <topology evidence="2">Lipid-anchor</topology>
    </subcellularLocation>
</comment>
<protein>
    <recommendedName>
        <fullName>Membrane-bound lytic murein transglycosylase A</fullName>
        <ecNumber>4.2.2.n1</ecNumber>
    </recommendedName>
    <alternativeName>
        <fullName>Mlt38</fullName>
    </alternativeName>
    <alternativeName>
        <fullName>Murein hydrolase A</fullName>
    </alternativeName>
</protein>
<sequence length="365" mass="40411">MKGRWVKYLLMGTVVAMLAACSSKPTDRGQQYKDGKFTQPFSLVNQPDAVGAPINAGDFAEQINHIRNSSPRLYGNQSNVYNAVQEWLRAGGDTRNMRQFGIDAWQMEGADNYGNVQFTGYYTPVIQARHTRQGEFQYPIYRMPPKRGRLPSRAEIYAGALSDKYILAYSNSLMDNFIMDVQGSGYIDFGDGSPLNFFSYAGKNGHAYRSIGKVLIDRGEVKKEDMSMQAIRHWGETHSEAEVRELLEQNPSFVFFKPQSFAPVKGASAVPLVGRASVASDRSIIPPGTTLLAEVPLLDNNGKFNGQYELRLMVALDVGGAIKGQHFDIYQGIGPEAGHRAGWYNHYGRVWVLKTAPGAGNVFSG</sequence>
<name>MLTA_ECO57</name>
<feature type="signal peptide" evidence="2">
    <location>
        <begin position="1"/>
        <end position="20"/>
    </location>
</feature>
<feature type="chain" id="PRO_0000032782" description="Membrane-bound lytic murein transglycosylase A">
    <location>
        <begin position="21"/>
        <end position="365"/>
    </location>
</feature>
<feature type="lipid moiety-binding region" description="N-palmitoyl cysteine" evidence="2">
    <location>
        <position position="21"/>
    </location>
</feature>
<feature type="lipid moiety-binding region" description="S-diacylglycerol cysteine" evidence="2">
    <location>
        <position position="21"/>
    </location>
</feature>
<dbReference type="EC" id="4.2.2.n1"/>
<dbReference type="EMBL" id="AE005174">
    <property type="protein sequence ID" value="AAG57927.1"/>
    <property type="molecule type" value="Genomic_DNA"/>
</dbReference>
<dbReference type="EMBL" id="BA000007">
    <property type="protein sequence ID" value="BAB37096.1"/>
    <property type="molecule type" value="Genomic_DNA"/>
</dbReference>
<dbReference type="PIR" id="A98088">
    <property type="entry name" value="A98088"/>
</dbReference>
<dbReference type="PIR" id="C85933">
    <property type="entry name" value="C85933"/>
</dbReference>
<dbReference type="RefSeq" id="NP_311700.1">
    <property type="nucleotide sequence ID" value="NC_002695.1"/>
</dbReference>
<dbReference type="RefSeq" id="WP_000678646.1">
    <property type="nucleotide sequence ID" value="NZ_VOAI01000003.1"/>
</dbReference>
<dbReference type="SMR" id="P0A936"/>
<dbReference type="STRING" id="155864.Z4130"/>
<dbReference type="GeneID" id="916516"/>
<dbReference type="GeneID" id="93779185"/>
<dbReference type="KEGG" id="ece:Z4130"/>
<dbReference type="KEGG" id="ecs:ECs_3673"/>
<dbReference type="PATRIC" id="fig|386585.9.peg.3840"/>
<dbReference type="eggNOG" id="COG2821">
    <property type="taxonomic scope" value="Bacteria"/>
</dbReference>
<dbReference type="HOGENOM" id="CLU_037751_2_0_6"/>
<dbReference type="OMA" id="DQNGHPY"/>
<dbReference type="Proteomes" id="UP000000558">
    <property type="component" value="Chromosome"/>
</dbReference>
<dbReference type="Proteomes" id="UP000002519">
    <property type="component" value="Chromosome"/>
</dbReference>
<dbReference type="GO" id="GO:0009279">
    <property type="term" value="C:cell outer membrane"/>
    <property type="evidence" value="ECO:0007669"/>
    <property type="project" value="UniProtKB-SubCell"/>
</dbReference>
<dbReference type="GO" id="GO:0004553">
    <property type="term" value="F:hydrolase activity, hydrolyzing O-glycosyl compounds"/>
    <property type="evidence" value="ECO:0007669"/>
    <property type="project" value="InterPro"/>
</dbReference>
<dbReference type="GO" id="GO:0008933">
    <property type="term" value="F:peptidoglycan lytic transglycosylase activity"/>
    <property type="evidence" value="ECO:0007669"/>
    <property type="project" value="TreeGrafter"/>
</dbReference>
<dbReference type="GO" id="GO:0071555">
    <property type="term" value="P:cell wall organization"/>
    <property type="evidence" value="ECO:0007669"/>
    <property type="project" value="UniProtKB-KW"/>
</dbReference>
<dbReference type="GO" id="GO:0009253">
    <property type="term" value="P:peptidoglycan catabolic process"/>
    <property type="evidence" value="ECO:0007669"/>
    <property type="project" value="TreeGrafter"/>
</dbReference>
<dbReference type="GO" id="GO:0009254">
    <property type="term" value="P:peptidoglycan turnover"/>
    <property type="evidence" value="ECO:0007669"/>
    <property type="project" value="InterPro"/>
</dbReference>
<dbReference type="CDD" id="cd22785">
    <property type="entry name" value="DPBB_MltA-like"/>
    <property type="match status" value="1"/>
</dbReference>
<dbReference type="CDD" id="cd14472">
    <property type="entry name" value="mltA_B_like"/>
    <property type="match status" value="1"/>
</dbReference>
<dbReference type="FunFam" id="2.40.240.50:FF:000001">
    <property type="entry name" value="Membrane-bound lytic murein transglycosylase A"/>
    <property type="match status" value="1"/>
</dbReference>
<dbReference type="Gene3D" id="2.40.240.50">
    <property type="entry name" value="Barwin-like endoglucanases"/>
    <property type="match status" value="1"/>
</dbReference>
<dbReference type="Gene3D" id="2.40.40.10">
    <property type="entry name" value="RlpA-like domain"/>
    <property type="match status" value="1"/>
</dbReference>
<dbReference type="InterPro" id="IPR010611">
    <property type="entry name" value="3D_dom"/>
</dbReference>
<dbReference type="InterPro" id="IPR026044">
    <property type="entry name" value="MltA"/>
</dbReference>
<dbReference type="InterPro" id="IPR005300">
    <property type="entry name" value="MltA_B"/>
</dbReference>
<dbReference type="InterPro" id="IPR036908">
    <property type="entry name" value="RlpA-like_sf"/>
</dbReference>
<dbReference type="NCBIfam" id="NF008366">
    <property type="entry name" value="PRK11162.1"/>
    <property type="match status" value="1"/>
</dbReference>
<dbReference type="PANTHER" id="PTHR30124">
    <property type="entry name" value="MEMBRANE-BOUND LYTIC MUREIN TRANSGLYCOSYLASE A"/>
    <property type="match status" value="1"/>
</dbReference>
<dbReference type="PANTHER" id="PTHR30124:SF0">
    <property type="entry name" value="MEMBRANE-BOUND LYTIC MUREIN TRANSGLYCOSYLASE A"/>
    <property type="match status" value="1"/>
</dbReference>
<dbReference type="Pfam" id="PF06725">
    <property type="entry name" value="3D"/>
    <property type="match status" value="1"/>
</dbReference>
<dbReference type="Pfam" id="PF03562">
    <property type="entry name" value="MltA"/>
    <property type="match status" value="1"/>
</dbReference>
<dbReference type="PIRSF" id="PIRSF019422">
    <property type="entry name" value="MltA"/>
    <property type="match status" value="1"/>
</dbReference>
<dbReference type="SMART" id="SM00925">
    <property type="entry name" value="MltA"/>
    <property type="match status" value="1"/>
</dbReference>
<dbReference type="SUPFAM" id="SSF50685">
    <property type="entry name" value="Barwin-like endoglucanases"/>
    <property type="match status" value="1"/>
</dbReference>
<dbReference type="PROSITE" id="PS51257">
    <property type="entry name" value="PROKAR_LIPOPROTEIN"/>
    <property type="match status" value="1"/>
</dbReference>
<keyword id="KW-0998">Cell outer membrane</keyword>
<keyword id="KW-0961">Cell wall biogenesis/degradation</keyword>
<keyword id="KW-0449">Lipoprotein</keyword>
<keyword id="KW-0456">Lyase</keyword>
<keyword id="KW-0472">Membrane</keyword>
<keyword id="KW-0564">Palmitate</keyword>
<keyword id="KW-1185">Reference proteome</keyword>
<keyword id="KW-0732">Signal</keyword>